<sequence length="118" mass="12794">MKSLLFTLAVFMLLAQLVSGSWYVKKCLNDVGICKKKCKPEELHVKNGWAMCGKQRDCCVPADKRANYPAFCVQTKTTRTSTVTATTATRATTATTTTLMMTTASMSSMTPTPVSPTG</sequence>
<evidence type="ECO:0000250" key="1">
    <source>
        <dbReference type="UniProtKB" id="P59665"/>
    </source>
</evidence>
<evidence type="ECO:0000250" key="2">
    <source>
        <dbReference type="UniProtKB" id="Q9BEE3"/>
    </source>
</evidence>
<evidence type="ECO:0000250" key="3">
    <source>
        <dbReference type="UniProtKB" id="Q9BYW3"/>
    </source>
</evidence>
<evidence type="ECO:0000255" key="4"/>
<evidence type="ECO:0000305" key="5"/>
<reference key="1">
    <citation type="submission" date="2006-11" db="EMBL/GenBank/DDBJ databases">
        <title>Evolution and sequence variation of human beta-defensin genes.</title>
        <authorList>
            <person name="Hollox E.J."/>
            <person name="Armour J.A.L."/>
        </authorList>
    </citation>
    <scope>NUCLEOTIDE SEQUENCE [GENOMIC DNA]</scope>
</reference>
<proteinExistence type="inferred from homology"/>
<name>DB126_PONPY</name>
<accession>A4H244</accession>
<dbReference type="EMBL" id="AM410149">
    <property type="protein sequence ID" value="CAL68959.1"/>
    <property type="molecule type" value="Genomic_DNA"/>
</dbReference>
<dbReference type="RefSeq" id="XP_054322831.1">
    <property type="nucleotide sequence ID" value="XM_054466856.1"/>
</dbReference>
<dbReference type="GeneID" id="129021455"/>
<dbReference type="GO" id="GO:0005576">
    <property type="term" value="C:extracellular region"/>
    <property type="evidence" value="ECO:0007669"/>
    <property type="project" value="UniProtKB-SubCell"/>
</dbReference>
<dbReference type="GO" id="GO:0050829">
    <property type="term" value="P:defense response to Gram-negative bacterium"/>
    <property type="evidence" value="ECO:0007669"/>
    <property type="project" value="UniProtKB-ARBA"/>
</dbReference>
<dbReference type="GO" id="GO:0007338">
    <property type="term" value="P:single fertilization"/>
    <property type="evidence" value="ECO:0007669"/>
    <property type="project" value="UniProtKB-KW"/>
</dbReference>
<dbReference type="InterPro" id="IPR050544">
    <property type="entry name" value="Beta-defensin"/>
</dbReference>
<dbReference type="PANTHER" id="PTHR15001:SF3">
    <property type="entry name" value="BETA-DEFENSIN 123"/>
    <property type="match status" value="1"/>
</dbReference>
<dbReference type="PANTHER" id="PTHR15001">
    <property type="entry name" value="BETA-DEFENSIN 123-RELATED"/>
    <property type="match status" value="1"/>
</dbReference>
<protein>
    <recommendedName>
        <fullName>Beta-defensin 126</fullName>
    </recommendedName>
    <alternativeName>
        <fullName>Defensin, beta 126</fullName>
    </alternativeName>
</protein>
<keyword id="KW-0044">Antibiotic</keyword>
<keyword id="KW-0929">Antimicrobial</keyword>
<keyword id="KW-0165">Cleavage on pair of basic residues</keyword>
<keyword id="KW-0211">Defensin</keyword>
<keyword id="KW-1015">Disulfide bond</keyword>
<keyword id="KW-0278">Fertilization</keyword>
<keyword id="KW-0964">Secreted</keyword>
<keyword id="KW-0732">Signal</keyword>
<organism>
    <name type="scientific">Pongo pygmaeus</name>
    <name type="common">Bornean orangutan</name>
    <dbReference type="NCBI Taxonomy" id="9600"/>
    <lineage>
        <taxon>Eukaryota</taxon>
        <taxon>Metazoa</taxon>
        <taxon>Chordata</taxon>
        <taxon>Craniata</taxon>
        <taxon>Vertebrata</taxon>
        <taxon>Euteleostomi</taxon>
        <taxon>Mammalia</taxon>
        <taxon>Eutheria</taxon>
        <taxon>Euarchontoglires</taxon>
        <taxon>Primates</taxon>
        <taxon>Haplorrhini</taxon>
        <taxon>Catarrhini</taxon>
        <taxon>Hominidae</taxon>
        <taxon>Pongo</taxon>
    </lineage>
</organism>
<feature type="signal peptide" evidence="4">
    <location>
        <begin position="1"/>
        <end position="20"/>
    </location>
</feature>
<feature type="chain" id="PRO_0000436303" description="Beta-defensin 126">
    <location>
        <begin position="21"/>
        <end position="118"/>
    </location>
</feature>
<feature type="region of interest" description="In vitro binds to LPS, mediates antimicrobial activity and inhibits LPS-mediated inflammation" evidence="3">
    <location>
        <begin position="21"/>
        <end position="63"/>
    </location>
</feature>
<feature type="disulfide bond" evidence="1">
    <location>
        <begin position="27"/>
        <end position="58"/>
    </location>
</feature>
<feature type="disulfide bond" evidence="1">
    <location>
        <begin position="34"/>
        <end position="52"/>
    </location>
</feature>
<feature type="disulfide bond" evidence="1">
    <location>
        <begin position="38"/>
        <end position="59"/>
    </location>
</feature>
<feature type="disulfide bond" description="Interchain" evidence="2">
    <location>
        <position position="72"/>
    </location>
</feature>
<comment type="function">
    <text evidence="2 3">Highly glycosylated atypical beta-defensin involved in several aspects of sperm function. Facilitates sperm transport in the female reproductive tract and contributes to sperm protection against immunodetection; both functions are probably implicating the negative surface charge provided by its O-linked oligosaccharides in the sperm glycocalyx. Involved in binding of sperm to oviductal epithelial cells to form a sperm reservoir until ovulation. Release from the sperm surface during capacitation and ovaluation by an elevation of oviductal fluid pH is unmasking other surface components and allows sperm to penetrate the cumulus matrix and bind to the zona pellucida of the oocyte. In vitro has antimicrobial activity and may inhibit LPS-mediated inflammation (By similarity).</text>
</comment>
<comment type="subunit">
    <text evidence="2">Homodimer or homooligomer; disulfide-linked.</text>
</comment>
<comment type="subcellular location">
    <subcellularLocation>
        <location evidence="2">Secreted</location>
    </subcellularLocation>
    <text evidence="2">Secreted by epididymal cells and is absorbed to the surface of sperm during transit through the epididymis.</text>
</comment>
<comment type="PTM">
    <text evidence="2 3">O-glycosylated; glycans contain alpha(2,3)-linked sialic acids (By similarity).</text>
</comment>
<comment type="similarity">
    <text evidence="5">Belongs to the beta-defensin family.</text>
</comment>
<gene>
    <name type="primary">DEFB126</name>
</gene>